<feature type="signal peptide" evidence="3">
    <location>
        <begin position="1"/>
        <end position="19"/>
    </location>
</feature>
<feature type="chain" id="PRO_0000004181" description="Calreticulin">
    <location>
        <begin position="20"/>
        <end position="424"/>
    </location>
</feature>
<feature type="repeat" description="1-1">
    <location>
        <begin position="191"/>
        <end position="202"/>
    </location>
</feature>
<feature type="repeat" description="1-2">
    <location>
        <begin position="210"/>
        <end position="221"/>
    </location>
</feature>
<feature type="repeat" description="1-3">
    <location>
        <begin position="227"/>
        <end position="238"/>
    </location>
</feature>
<feature type="repeat" description="1-4">
    <location>
        <begin position="246"/>
        <end position="256"/>
    </location>
</feature>
<feature type="repeat" description="2-1">
    <location>
        <begin position="260"/>
        <end position="270"/>
    </location>
</feature>
<feature type="repeat" description="2-2">
    <location>
        <begin position="274"/>
        <end position="284"/>
    </location>
</feature>
<feature type="repeat" description="2-3">
    <location>
        <begin position="288"/>
        <end position="298"/>
    </location>
</feature>
<feature type="region of interest" description="4 X 12 AA approximate repeats">
    <location>
        <begin position="191"/>
        <end position="256"/>
    </location>
</feature>
<feature type="region of interest" description="3 X 11 AA approximate repeats">
    <location>
        <begin position="260"/>
        <end position="298"/>
    </location>
</feature>
<feature type="region of interest" description="Disordered" evidence="5">
    <location>
        <begin position="370"/>
        <end position="424"/>
    </location>
</feature>
<feature type="short sequence motif" description="Prevents secretion from ER" evidence="4">
    <location>
        <begin position="421"/>
        <end position="424"/>
    </location>
</feature>
<feature type="compositionally biased region" description="Basic and acidic residues" evidence="5">
    <location>
        <begin position="370"/>
        <end position="385"/>
    </location>
</feature>
<feature type="compositionally biased region" description="Acidic residues" evidence="5">
    <location>
        <begin position="386"/>
        <end position="400"/>
    </location>
</feature>
<feature type="compositionally biased region" description="Basic and acidic residues" evidence="5">
    <location>
        <begin position="401"/>
        <end position="424"/>
    </location>
</feature>
<feature type="binding site" evidence="2">
    <location>
        <position position="109"/>
    </location>
    <ligand>
        <name>an alpha-D-glucoside</name>
        <dbReference type="ChEBI" id="CHEBI:22390"/>
    </ligand>
</feature>
<feature type="binding site" evidence="2">
    <location>
        <position position="111"/>
    </location>
    <ligand>
        <name>an alpha-D-glucoside</name>
        <dbReference type="ChEBI" id="CHEBI:22390"/>
    </ligand>
</feature>
<feature type="binding site" evidence="2">
    <location>
        <position position="128"/>
    </location>
    <ligand>
        <name>an alpha-D-glucoside</name>
        <dbReference type="ChEBI" id="CHEBI:22390"/>
    </ligand>
</feature>
<feature type="binding site" evidence="2">
    <location>
        <position position="135"/>
    </location>
    <ligand>
        <name>an alpha-D-glucoside</name>
        <dbReference type="ChEBI" id="CHEBI:22390"/>
    </ligand>
</feature>
<feature type="binding site" evidence="2">
    <location>
        <position position="318"/>
    </location>
    <ligand>
        <name>an alpha-D-glucoside</name>
        <dbReference type="ChEBI" id="CHEBI:22390"/>
    </ligand>
</feature>
<feature type="disulfide bond" evidence="1">
    <location>
        <begin position="105"/>
        <end position="137"/>
    </location>
</feature>
<feature type="sequence conflict" description="In Ref. 1; AAB87719." evidence="6" ref="1">
    <original>K</original>
    <variation>N</variation>
    <location>
        <position position="183"/>
    </location>
</feature>
<sequence length="424" mass="48365">MRLLLCLIFLVFVFNFALSTVHFKDTFDNDWESRWVVSDWHKEDGKSGKLVHTAGKWFGDENQKGIQTSEDARFYAVSAKFPSFSNKGKDLVLQYTVKNEQKVDCGGSYIKLLPSKLDQSAFDGESEYSIMFGPDVCGASKRVHVILNYKGKNHLIKKEINKVETDQLTHQYTLVISPDNTYKVLVDNKEIQAGNLADDWELLPSKQIKDPKQSKPVDWVDVKEIDDPEDVKPAGHDDIPASIVDPEAVKPEDWNEEDDGEWEAPTIANPEYKGEWKAKKIPNPEYKGEWVHPLIDNPEYAEDNELYLFNDLGAIGFELWQVKSGSIFNNMIVTDSVEEAKDFSEKTFVANQEAEKKMFDDLEAAKAEERKKADEKLAAEKAAEKEAEEADEEEEEVAEEDLVKTDDKKEEVKKSTKKVDHDEL</sequence>
<keyword id="KW-0106">Calcium</keyword>
<keyword id="KW-0143">Chaperone</keyword>
<keyword id="KW-1015">Disulfide bond</keyword>
<keyword id="KW-0256">Endoplasmic reticulum</keyword>
<keyword id="KW-0430">Lectin</keyword>
<keyword id="KW-0479">Metal-binding</keyword>
<keyword id="KW-1185">Reference proteome</keyword>
<keyword id="KW-0677">Repeat</keyword>
<keyword id="KW-0732">Signal</keyword>
<keyword id="KW-0862">Zinc</keyword>
<evidence type="ECO:0000250" key="1"/>
<evidence type="ECO:0000250" key="2">
    <source>
        <dbReference type="UniProtKB" id="P14211"/>
    </source>
</evidence>
<evidence type="ECO:0000255" key="3"/>
<evidence type="ECO:0000255" key="4">
    <source>
        <dbReference type="PROSITE-ProRule" id="PRU10138"/>
    </source>
</evidence>
<evidence type="ECO:0000256" key="5">
    <source>
        <dbReference type="SAM" id="MobiDB-lite"/>
    </source>
</evidence>
<evidence type="ECO:0000305" key="6"/>
<proteinExistence type="evidence at protein level"/>
<protein>
    <recommendedName>
        <fullName>Calreticulin</fullName>
    </recommendedName>
</protein>
<accession>Q23858</accession>
<accession>Q54QX4</accession>
<name>CALR_DICDI</name>
<organism>
    <name type="scientific">Dictyostelium discoideum</name>
    <name type="common">Social amoeba</name>
    <dbReference type="NCBI Taxonomy" id="44689"/>
    <lineage>
        <taxon>Eukaryota</taxon>
        <taxon>Amoebozoa</taxon>
        <taxon>Evosea</taxon>
        <taxon>Eumycetozoa</taxon>
        <taxon>Dictyostelia</taxon>
        <taxon>Dictyosteliales</taxon>
        <taxon>Dictyosteliaceae</taxon>
        <taxon>Dictyostelium</taxon>
    </lineage>
</organism>
<gene>
    <name type="primary">crtA</name>
    <name type="ORF">DDB_G0283539</name>
</gene>
<reference key="1">
    <citation type="submission" date="1997-12" db="EMBL/GenBank/DDBJ databases">
        <authorList>
            <person name="Mueller-Taubenberger A."/>
            <person name="Gerisch G."/>
        </authorList>
    </citation>
    <scope>NUCLEOTIDE SEQUENCE [MRNA]</scope>
    <source>
        <strain>AX3</strain>
    </source>
</reference>
<reference key="2">
    <citation type="journal article" date="2005" name="Nature">
        <title>The genome of the social amoeba Dictyostelium discoideum.</title>
        <authorList>
            <person name="Eichinger L."/>
            <person name="Pachebat J.A."/>
            <person name="Gloeckner G."/>
            <person name="Rajandream M.A."/>
            <person name="Sucgang R."/>
            <person name="Berriman M."/>
            <person name="Song J."/>
            <person name="Olsen R."/>
            <person name="Szafranski K."/>
            <person name="Xu Q."/>
            <person name="Tunggal B."/>
            <person name="Kummerfeld S."/>
            <person name="Madera M."/>
            <person name="Konfortov B.A."/>
            <person name="Rivero F."/>
            <person name="Bankier A.T."/>
            <person name="Lehmann R."/>
            <person name="Hamlin N."/>
            <person name="Davies R."/>
            <person name="Gaudet P."/>
            <person name="Fey P."/>
            <person name="Pilcher K."/>
            <person name="Chen G."/>
            <person name="Saunders D."/>
            <person name="Sodergren E.J."/>
            <person name="Davis P."/>
            <person name="Kerhornou A."/>
            <person name="Nie X."/>
            <person name="Hall N."/>
            <person name="Anjard C."/>
            <person name="Hemphill L."/>
            <person name="Bason N."/>
            <person name="Farbrother P."/>
            <person name="Desany B."/>
            <person name="Just E."/>
            <person name="Morio T."/>
            <person name="Rost R."/>
            <person name="Churcher C.M."/>
            <person name="Cooper J."/>
            <person name="Haydock S."/>
            <person name="van Driessche N."/>
            <person name="Cronin A."/>
            <person name="Goodhead I."/>
            <person name="Muzny D.M."/>
            <person name="Mourier T."/>
            <person name="Pain A."/>
            <person name="Lu M."/>
            <person name="Harper D."/>
            <person name="Lindsay R."/>
            <person name="Hauser H."/>
            <person name="James K.D."/>
            <person name="Quiles M."/>
            <person name="Madan Babu M."/>
            <person name="Saito T."/>
            <person name="Buchrieser C."/>
            <person name="Wardroper A."/>
            <person name="Felder M."/>
            <person name="Thangavelu M."/>
            <person name="Johnson D."/>
            <person name="Knights A."/>
            <person name="Loulseged H."/>
            <person name="Mungall K.L."/>
            <person name="Oliver K."/>
            <person name="Price C."/>
            <person name="Quail M.A."/>
            <person name="Urushihara H."/>
            <person name="Hernandez J."/>
            <person name="Rabbinowitsch E."/>
            <person name="Steffen D."/>
            <person name="Sanders M."/>
            <person name="Ma J."/>
            <person name="Kohara Y."/>
            <person name="Sharp S."/>
            <person name="Simmonds M.N."/>
            <person name="Spiegler S."/>
            <person name="Tivey A."/>
            <person name="Sugano S."/>
            <person name="White B."/>
            <person name="Walker D."/>
            <person name="Woodward J.R."/>
            <person name="Winckler T."/>
            <person name="Tanaka Y."/>
            <person name="Shaulsky G."/>
            <person name="Schleicher M."/>
            <person name="Weinstock G.M."/>
            <person name="Rosenthal A."/>
            <person name="Cox E.C."/>
            <person name="Chisholm R.L."/>
            <person name="Gibbs R.A."/>
            <person name="Loomis W.F."/>
            <person name="Platzer M."/>
            <person name="Kay R.R."/>
            <person name="Williams J.G."/>
            <person name="Dear P.H."/>
            <person name="Noegel A.A."/>
            <person name="Barrell B.G."/>
            <person name="Kuspa A."/>
        </authorList>
    </citation>
    <scope>NUCLEOTIDE SEQUENCE [LARGE SCALE GENOMIC DNA]</scope>
    <source>
        <strain>AX4</strain>
    </source>
</reference>
<reference key="3">
    <citation type="journal article" date="2006" name="J. Proteome Res.">
        <title>Identification of novel centrosomal proteins in Dictyostelium discoideum by comparative proteomic approaches.</title>
        <authorList>
            <person name="Reinders Y."/>
            <person name="Schulz I."/>
            <person name="Graef R."/>
            <person name="Sickmann A."/>
        </authorList>
    </citation>
    <scope>IDENTIFICATION BY MASS SPECTROMETRY [LARGE SCALE ANALYSIS]</scope>
</reference>
<reference key="4">
    <citation type="journal article" date="2006" name="Mol. Cell. Proteomics">
        <title>Proteomics fingerprinting of phagosome maturation and evidence for the role of a Galpha during uptake.</title>
        <authorList>
            <person name="Gotthardt D."/>
            <person name="Blancheteau V."/>
            <person name="Bosserhoff A."/>
            <person name="Ruppert T."/>
            <person name="Delorenzi M."/>
            <person name="Soldati T."/>
        </authorList>
    </citation>
    <scope>IDENTIFICATION BY MASS SPECTROMETRY [LARGE SCALE ANALYSIS]</scope>
    <source>
        <strain>AX2</strain>
    </source>
</reference>
<comment type="function">
    <text evidence="1">Molecular calcium-binding chaperone promoting folding, oligomeric assembly and quality control in the ER via the calreticulin/calnexin cycle. This lectin may interact transiently with almost all of the monoglucosylated glycoproteins that are synthesized in the ER (By similarity).</text>
</comment>
<comment type="subcellular location">
    <subcellularLocation>
        <location>Endoplasmic reticulum lumen</location>
    </subcellularLocation>
</comment>
<comment type="domain">
    <text evidence="1">Can be divided into a N-terminal globular domain, a proline-rich P-domain forming an elongated arm-like structure and a C-terminal acidic domain. The P-domain binds one molecule of calcium with high affinity, whereas the acidic C-domain binds multiple calcium ions with low affinity (By similarity).</text>
</comment>
<comment type="domain">
    <text evidence="1">The interaction with glycans occurs through a binding site in the globular lectin domain.</text>
</comment>
<comment type="domain">
    <text evidence="1">The zinc binding sites are localized to the N-domain.</text>
</comment>
<comment type="similarity">
    <text evidence="6">Belongs to the calreticulin family.</text>
</comment>
<dbReference type="EMBL" id="U36937">
    <property type="protein sequence ID" value="AAB87719.1"/>
    <property type="molecule type" value="mRNA"/>
</dbReference>
<dbReference type="EMBL" id="AAFI02000055">
    <property type="protein sequence ID" value="EAL65647.1"/>
    <property type="molecule type" value="Genomic_DNA"/>
</dbReference>
<dbReference type="RefSeq" id="XP_639010.1">
    <property type="nucleotide sequence ID" value="XM_633918.1"/>
</dbReference>
<dbReference type="SMR" id="Q23858"/>
<dbReference type="FunCoup" id="Q23858">
    <property type="interactions" value="632"/>
</dbReference>
<dbReference type="IntAct" id="Q23858">
    <property type="interactions" value="1"/>
</dbReference>
<dbReference type="STRING" id="44689.Q23858"/>
<dbReference type="PaxDb" id="44689-DDB0191384"/>
<dbReference type="EnsemblProtists" id="EAL65647">
    <property type="protein sequence ID" value="EAL65647"/>
    <property type="gene ID" value="DDB_G0283539"/>
</dbReference>
<dbReference type="GeneID" id="8624140"/>
<dbReference type="KEGG" id="ddi:DDB_G0283539"/>
<dbReference type="dictyBase" id="DDB_G0283539">
    <property type="gene designation" value="crtA"/>
</dbReference>
<dbReference type="VEuPathDB" id="AmoebaDB:DDB_G0283539"/>
<dbReference type="eggNOG" id="KOG0674">
    <property type="taxonomic scope" value="Eukaryota"/>
</dbReference>
<dbReference type="HOGENOM" id="CLU_018224_0_2_1"/>
<dbReference type="InParanoid" id="Q23858"/>
<dbReference type="OMA" id="KRDEICA"/>
<dbReference type="PhylomeDB" id="Q23858"/>
<dbReference type="Reactome" id="R-DDI-901042">
    <property type="pathway name" value="Calnexin/calreticulin cycle"/>
</dbReference>
<dbReference type="PRO" id="PR:Q23858"/>
<dbReference type="Proteomes" id="UP000002195">
    <property type="component" value="Chromosome 4"/>
</dbReference>
<dbReference type="GO" id="GO:0005783">
    <property type="term" value="C:endoplasmic reticulum"/>
    <property type="evidence" value="ECO:0000314"/>
    <property type="project" value="dictyBase"/>
</dbReference>
<dbReference type="GO" id="GO:0005788">
    <property type="term" value="C:endoplasmic reticulum lumen"/>
    <property type="evidence" value="ECO:0000304"/>
    <property type="project" value="dictyBase"/>
</dbReference>
<dbReference type="GO" id="GO:0005789">
    <property type="term" value="C:endoplasmic reticulum membrane"/>
    <property type="evidence" value="ECO:0000318"/>
    <property type="project" value="GO_Central"/>
</dbReference>
<dbReference type="GO" id="GO:0045335">
    <property type="term" value="C:phagocytic vesicle"/>
    <property type="evidence" value="ECO:0007005"/>
    <property type="project" value="dictyBase"/>
</dbReference>
<dbReference type="GO" id="GO:0005509">
    <property type="term" value="F:calcium ion binding"/>
    <property type="evidence" value="ECO:0000318"/>
    <property type="project" value="GO_Central"/>
</dbReference>
<dbReference type="GO" id="GO:0030246">
    <property type="term" value="F:carbohydrate binding"/>
    <property type="evidence" value="ECO:0007669"/>
    <property type="project" value="UniProtKB-KW"/>
</dbReference>
<dbReference type="GO" id="GO:0051082">
    <property type="term" value="F:unfolded protein binding"/>
    <property type="evidence" value="ECO:0007669"/>
    <property type="project" value="InterPro"/>
</dbReference>
<dbReference type="GO" id="GO:0036503">
    <property type="term" value="P:ERAD pathway"/>
    <property type="evidence" value="ECO:0000318"/>
    <property type="project" value="GO_Central"/>
</dbReference>
<dbReference type="GO" id="GO:0006911">
    <property type="term" value="P:phagocytosis, engulfment"/>
    <property type="evidence" value="ECO:0000316"/>
    <property type="project" value="dictyBase"/>
</dbReference>
<dbReference type="GO" id="GO:0006457">
    <property type="term" value="P:protein folding"/>
    <property type="evidence" value="ECO:0000318"/>
    <property type="project" value="GO_Central"/>
</dbReference>
<dbReference type="GO" id="GO:0051707">
    <property type="term" value="P:response to other organism"/>
    <property type="evidence" value="ECO:0000304"/>
    <property type="project" value="dictyBase"/>
</dbReference>
<dbReference type="FunFam" id="2.10.250.10:FF:000002">
    <property type="entry name" value="Calreticulin"/>
    <property type="match status" value="1"/>
</dbReference>
<dbReference type="FunFam" id="2.60.120.200:FF:000018">
    <property type="entry name" value="Calreticulin 1b"/>
    <property type="match status" value="1"/>
</dbReference>
<dbReference type="Gene3D" id="2.60.120.200">
    <property type="match status" value="1"/>
</dbReference>
<dbReference type="Gene3D" id="2.10.250.10">
    <property type="entry name" value="Calreticulin/calnexin, P domain"/>
    <property type="match status" value="1"/>
</dbReference>
<dbReference type="InterPro" id="IPR001580">
    <property type="entry name" value="Calret/calnex"/>
</dbReference>
<dbReference type="InterPro" id="IPR018124">
    <property type="entry name" value="Calret/calnex_CS"/>
</dbReference>
<dbReference type="InterPro" id="IPR009169">
    <property type="entry name" value="Calreticulin"/>
</dbReference>
<dbReference type="InterPro" id="IPR009033">
    <property type="entry name" value="Calreticulin/calnexin_P_dom_sf"/>
</dbReference>
<dbReference type="InterPro" id="IPR013320">
    <property type="entry name" value="ConA-like_dom_sf"/>
</dbReference>
<dbReference type="PANTHER" id="PTHR11073:SF2">
    <property type="entry name" value="CALRETICULIN"/>
    <property type="match status" value="1"/>
</dbReference>
<dbReference type="PANTHER" id="PTHR11073">
    <property type="entry name" value="CALRETICULIN AND CALNEXIN"/>
    <property type="match status" value="1"/>
</dbReference>
<dbReference type="Pfam" id="PF00262">
    <property type="entry name" value="Calreticulin"/>
    <property type="match status" value="2"/>
</dbReference>
<dbReference type="PIRSF" id="PIRSF002356">
    <property type="entry name" value="Calreticulin"/>
    <property type="match status" value="1"/>
</dbReference>
<dbReference type="PRINTS" id="PR00626">
    <property type="entry name" value="CALRETICULIN"/>
</dbReference>
<dbReference type="SUPFAM" id="SSF49899">
    <property type="entry name" value="Concanavalin A-like lectins/glucanases"/>
    <property type="match status" value="1"/>
</dbReference>
<dbReference type="SUPFAM" id="SSF63887">
    <property type="entry name" value="P-domain of calnexin/calreticulin"/>
    <property type="match status" value="1"/>
</dbReference>
<dbReference type="PROSITE" id="PS00804">
    <property type="entry name" value="CALRETICULIN_2"/>
    <property type="match status" value="1"/>
</dbReference>
<dbReference type="PROSITE" id="PS00805">
    <property type="entry name" value="CALRETICULIN_REPEAT"/>
    <property type="match status" value="1"/>
</dbReference>
<dbReference type="PROSITE" id="PS00014">
    <property type="entry name" value="ER_TARGET"/>
    <property type="match status" value="1"/>
</dbReference>